<evidence type="ECO:0000255" key="1">
    <source>
        <dbReference type="HAMAP-Rule" id="MF_00379"/>
    </source>
</evidence>
<protein>
    <recommendedName>
        <fullName evidence="1">tRNA modification GTPase MnmE</fullName>
        <ecNumber evidence="1">3.6.-.-</ecNumber>
    </recommendedName>
</protein>
<dbReference type="EC" id="3.6.-.-" evidence="1"/>
<dbReference type="EMBL" id="BX571857">
    <property type="protein sequence ID" value="CAG44413.1"/>
    <property type="molecule type" value="Genomic_DNA"/>
</dbReference>
<dbReference type="RefSeq" id="WP_000362508.1">
    <property type="nucleotide sequence ID" value="NC_002953.3"/>
</dbReference>
<dbReference type="SMR" id="Q6G5W4"/>
<dbReference type="KEGG" id="sas:SAS2594"/>
<dbReference type="HOGENOM" id="CLU_019624_4_1_9"/>
<dbReference type="GO" id="GO:0005829">
    <property type="term" value="C:cytosol"/>
    <property type="evidence" value="ECO:0007669"/>
    <property type="project" value="TreeGrafter"/>
</dbReference>
<dbReference type="GO" id="GO:0005525">
    <property type="term" value="F:GTP binding"/>
    <property type="evidence" value="ECO:0007669"/>
    <property type="project" value="UniProtKB-UniRule"/>
</dbReference>
<dbReference type="GO" id="GO:0003924">
    <property type="term" value="F:GTPase activity"/>
    <property type="evidence" value="ECO:0007669"/>
    <property type="project" value="UniProtKB-UniRule"/>
</dbReference>
<dbReference type="GO" id="GO:0046872">
    <property type="term" value="F:metal ion binding"/>
    <property type="evidence" value="ECO:0007669"/>
    <property type="project" value="UniProtKB-KW"/>
</dbReference>
<dbReference type="GO" id="GO:0030488">
    <property type="term" value="P:tRNA methylation"/>
    <property type="evidence" value="ECO:0007669"/>
    <property type="project" value="TreeGrafter"/>
</dbReference>
<dbReference type="GO" id="GO:0002098">
    <property type="term" value="P:tRNA wobble uridine modification"/>
    <property type="evidence" value="ECO:0007669"/>
    <property type="project" value="TreeGrafter"/>
</dbReference>
<dbReference type="CDD" id="cd04164">
    <property type="entry name" value="trmE"/>
    <property type="match status" value="1"/>
</dbReference>
<dbReference type="CDD" id="cd14858">
    <property type="entry name" value="TrmE_N"/>
    <property type="match status" value="1"/>
</dbReference>
<dbReference type="FunFam" id="3.30.1360.120:FF:000003">
    <property type="entry name" value="tRNA modification GTPase MnmE"/>
    <property type="match status" value="1"/>
</dbReference>
<dbReference type="FunFam" id="3.40.50.300:FF:000494">
    <property type="entry name" value="tRNA modification GTPase MnmE"/>
    <property type="match status" value="1"/>
</dbReference>
<dbReference type="Gene3D" id="3.40.50.300">
    <property type="entry name" value="P-loop containing nucleotide triphosphate hydrolases"/>
    <property type="match status" value="1"/>
</dbReference>
<dbReference type="Gene3D" id="3.30.1360.120">
    <property type="entry name" value="Probable tRNA modification gtpase trme, domain 1"/>
    <property type="match status" value="1"/>
</dbReference>
<dbReference type="Gene3D" id="1.20.120.430">
    <property type="entry name" value="tRNA modification GTPase MnmE domain 2"/>
    <property type="match status" value="1"/>
</dbReference>
<dbReference type="HAMAP" id="MF_00379">
    <property type="entry name" value="GTPase_MnmE"/>
    <property type="match status" value="1"/>
</dbReference>
<dbReference type="InterPro" id="IPR031168">
    <property type="entry name" value="G_TrmE"/>
</dbReference>
<dbReference type="InterPro" id="IPR006073">
    <property type="entry name" value="GTP-bd"/>
</dbReference>
<dbReference type="InterPro" id="IPR018948">
    <property type="entry name" value="GTP-bd_TrmE_N"/>
</dbReference>
<dbReference type="InterPro" id="IPR004520">
    <property type="entry name" value="GTPase_MnmE"/>
</dbReference>
<dbReference type="InterPro" id="IPR027368">
    <property type="entry name" value="MnmE_dom2"/>
</dbReference>
<dbReference type="InterPro" id="IPR025867">
    <property type="entry name" value="MnmE_helical"/>
</dbReference>
<dbReference type="InterPro" id="IPR027417">
    <property type="entry name" value="P-loop_NTPase"/>
</dbReference>
<dbReference type="InterPro" id="IPR005225">
    <property type="entry name" value="Small_GTP-bd"/>
</dbReference>
<dbReference type="InterPro" id="IPR027266">
    <property type="entry name" value="TrmE/GcvT_dom1"/>
</dbReference>
<dbReference type="NCBIfam" id="TIGR00450">
    <property type="entry name" value="mnmE_trmE_thdF"/>
    <property type="match status" value="1"/>
</dbReference>
<dbReference type="NCBIfam" id="NF003661">
    <property type="entry name" value="PRK05291.1-3"/>
    <property type="match status" value="1"/>
</dbReference>
<dbReference type="NCBIfam" id="TIGR00231">
    <property type="entry name" value="small_GTP"/>
    <property type="match status" value="1"/>
</dbReference>
<dbReference type="PANTHER" id="PTHR42714">
    <property type="entry name" value="TRNA MODIFICATION GTPASE GTPBP3"/>
    <property type="match status" value="1"/>
</dbReference>
<dbReference type="PANTHER" id="PTHR42714:SF2">
    <property type="entry name" value="TRNA MODIFICATION GTPASE GTPBP3, MITOCHONDRIAL"/>
    <property type="match status" value="1"/>
</dbReference>
<dbReference type="Pfam" id="PF01926">
    <property type="entry name" value="MMR_HSR1"/>
    <property type="match status" value="1"/>
</dbReference>
<dbReference type="Pfam" id="PF12631">
    <property type="entry name" value="MnmE_helical"/>
    <property type="match status" value="1"/>
</dbReference>
<dbReference type="Pfam" id="PF10396">
    <property type="entry name" value="TrmE_N"/>
    <property type="match status" value="1"/>
</dbReference>
<dbReference type="PRINTS" id="PR00449">
    <property type="entry name" value="RASTRNSFRMNG"/>
</dbReference>
<dbReference type="SUPFAM" id="SSF52540">
    <property type="entry name" value="P-loop containing nucleoside triphosphate hydrolases"/>
    <property type="match status" value="1"/>
</dbReference>
<dbReference type="SUPFAM" id="SSF116878">
    <property type="entry name" value="TrmE connector domain"/>
    <property type="match status" value="1"/>
</dbReference>
<dbReference type="PROSITE" id="PS51709">
    <property type="entry name" value="G_TRME"/>
    <property type="match status" value="1"/>
</dbReference>
<comment type="function">
    <text evidence="1">Exhibits a very high intrinsic GTPase hydrolysis rate. Involved in the addition of a carboxymethylaminomethyl (cmnm) group at the wobble position (U34) of certain tRNAs, forming tRNA-cmnm(5)s(2)U34.</text>
</comment>
<comment type="cofactor">
    <cofactor evidence="1">
        <name>K(+)</name>
        <dbReference type="ChEBI" id="CHEBI:29103"/>
    </cofactor>
    <text evidence="1">Binds 1 potassium ion per subunit.</text>
</comment>
<comment type="subunit">
    <text evidence="1">Homodimer. Heterotetramer of two MnmE and two MnmG subunits.</text>
</comment>
<comment type="subcellular location">
    <subcellularLocation>
        <location evidence="1">Cytoplasm</location>
    </subcellularLocation>
</comment>
<comment type="similarity">
    <text evidence="1">Belongs to the TRAFAC class TrmE-Era-EngA-EngB-Septin-like GTPase superfamily. TrmE GTPase family.</text>
</comment>
<feature type="chain" id="PRO_0000188919" description="tRNA modification GTPase MnmE">
    <location>
        <begin position="1"/>
        <end position="459"/>
    </location>
</feature>
<feature type="domain" description="TrmE-type G">
    <location>
        <begin position="221"/>
        <end position="380"/>
    </location>
</feature>
<feature type="binding site" evidence="1">
    <location>
        <position position="22"/>
    </location>
    <ligand>
        <name>(6S)-5-formyl-5,6,7,8-tetrahydrofolate</name>
        <dbReference type="ChEBI" id="CHEBI:57457"/>
    </ligand>
</feature>
<feature type="binding site" evidence="1">
    <location>
        <position position="85"/>
    </location>
    <ligand>
        <name>(6S)-5-formyl-5,6,7,8-tetrahydrofolate</name>
        <dbReference type="ChEBI" id="CHEBI:57457"/>
    </ligand>
</feature>
<feature type="binding site" evidence="1">
    <location>
        <position position="124"/>
    </location>
    <ligand>
        <name>(6S)-5-formyl-5,6,7,8-tetrahydrofolate</name>
        <dbReference type="ChEBI" id="CHEBI:57457"/>
    </ligand>
</feature>
<feature type="binding site" evidence="1">
    <location>
        <begin position="231"/>
        <end position="236"/>
    </location>
    <ligand>
        <name>GTP</name>
        <dbReference type="ChEBI" id="CHEBI:37565"/>
    </ligand>
</feature>
<feature type="binding site" evidence="1">
    <location>
        <position position="231"/>
    </location>
    <ligand>
        <name>K(+)</name>
        <dbReference type="ChEBI" id="CHEBI:29103"/>
    </ligand>
</feature>
<feature type="binding site" evidence="1">
    <location>
        <position position="235"/>
    </location>
    <ligand>
        <name>Mg(2+)</name>
        <dbReference type="ChEBI" id="CHEBI:18420"/>
    </ligand>
</feature>
<feature type="binding site" evidence="1">
    <location>
        <begin position="250"/>
        <end position="256"/>
    </location>
    <ligand>
        <name>GTP</name>
        <dbReference type="ChEBI" id="CHEBI:37565"/>
    </ligand>
</feature>
<feature type="binding site" evidence="1">
    <location>
        <position position="250"/>
    </location>
    <ligand>
        <name>K(+)</name>
        <dbReference type="ChEBI" id="CHEBI:29103"/>
    </ligand>
</feature>
<feature type="binding site" evidence="1">
    <location>
        <position position="252"/>
    </location>
    <ligand>
        <name>K(+)</name>
        <dbReference type="ChEBI" id="CHEBI:29103"/>
    </ligand>
</feature>
<feature type="binding site" evidence="1">
    <location>
        <position position="255"/>
    </location>
    <ligand>
        <name>K(+)</name>
        <dbReference type="ChEBI" id="CHEBI:29103"/>
    </ligand>
</feature>
<feature type="binding site" evidence="1">
    <location>
        <position position="256"/>
    </location>
    <ligand>
        <name>Mg(2+)</name>
        <dbReference type="ChEBI" id="CHEBI:18420"/>
    </ligand>
</feature>
<feature type="binding site" evidence="1">
    <location>
        <begin position="275"/>
        <end position="278"/>
    </location>
    <ligand>
        <name>GTP</name>
        <dbReference type="ChEBI" id="CHEBI:37565"/>
    </ligand>
</feature>
<feature type="binding site" evidence="1">
    <location>
        <position position="459"/>
    </location>
    <ligand>
        <name>(6S)-5-formyl-5,6,7,8-tetrahydrofolate</name>
        <dbReference type="ChEBI" id="CHEBI:57457"/>
    </ligand>
</feature>
<gene>
    <name evidence="1" type="primary">mnmE</name>
    <name evidence="1" type="synonym">trmE</name>
    <name type="ordered locus">SAS2594</name>
</gene>
<proteinExistence type="inferred from homology"/>
<accession>Q6G5W4</accession>
<keyword id="KW-0963">Cytoplasm</keyword>
<keyword id="KW-0342">GTP-binding</keyword>
<keyword id="KW-0378">Hydrolase</keyword>
<keyword id="KW-0460">Magnesium</keyword>
<keyword id="KW-0479">Metal-binding</keyword>
<keyword id="KW-0547">Nucleotide-binding</keyword>
<keyword id="KW-0630">Potassium</keyword>
<keyword id="KW-0819">tRNA processing</keyword>
<name>MNME_STAAS</name>
<reference key="1">
    <citation type="journal article" date="2004" name="Proc. Natl. Acad. Sci. U.S.A.">
        <title>Complete genomes of two clinical Staphylococcus aureus strains: evidence for the rapid evolution of virulence and drug resistance.</title>
        <authorList>
            <person name="Holden M.T.G."/>
            <person name="Feil E.J."/>
            <person name="Lindsay J.A."/>
            <person name="Peacock S.J."/>
            <person name="Day N.P.J."/>
            <person name="Enright M.C."/>
            <person name="Foster T.J."/>
            <person name="Moore C.E."/>
            <person name="Hurst L."/>
            <person name="Atkin R."/>
            <person name="Barron A."/>
            <person name="Bason N."/>
            <person name="Bentley S.D."/>
            <person name="Chillingworth C."/>
            <person name="Chillingworth T."/>
            <person name="Churcher C."/>
            <person name="Clark L."/>
            <person name="Corton C."/>
            <person name="Cronin A."/>
            <person name="Doggett J."/>
            <person name="Dowd L."/>
            <person name="Feltwell T."/>
            <person name="Hance Z."/>
            <person name="Harris B."/>
            <person name="Hauser H."/>
            <person name="Holroyd S."/>
            <person name="Jagels K."/>
            <person name="James K.D."/>
            <person name="Lennard N."/>
            <person name="Line A."/>
            <person name="Mayes R."/>
            <person name="Moule S."/>
            <person name="Mungall K."/>
            <person name="Ormond D."/>
            <person name="Quail M.A."/>
            <person name="Rabbinowitsch E."/>
            <person name="Rutherford K.M."/>
            <person name="Sanders M."/>
            <person name="Sharp S."/>
            <person name="Simmonds M."/>
            <person name="Stevens K."/>
            <person name="Whitehead S."/>
            <person name="Barrell B.G."/>
            <person name="Spratt B.G."/>
            <person name="Parkhill J."/>
        </authorList>
    </citation>
    <scope>NUCLEOTIDE SEQUENCE [LARGE SCALE GENOMIC DNA]</scope>
    <source>
        <strain>MSSA476</strain>
    </source>
</reference>
<organism>
    <name type="scientific">Staphylococcus aureus (strain MSSA476)</name>
    <dbReference type="NCBI Taxonomy" id="282459"/>
    <lineage>
        <taxon>Bacteria</taxon>
        <taxon>Bacillati</taxon>
        <taxon>Bacillota</taxon>
        <taxon>Bacilli</taxon>
        <taxon>Bacillales</taxon>
        <taxon>Staphylococcaceae</taxon>
        <taxon>Staphylococcus</taxon>
    </lineage>
</organism>
<sequence length="459" mass="51354">MDLDTITSISTPMGEGAIGIVRLSGPQAVEIADKLYKGKHLLNDVPSHTINYGHIIDPESKEVVEEVMVSVLRAPKTFTREDIIEINCHGGILTINRVLELTMTYGARMAEPGEFTKRAFLNGRIDLSQAEAVMDFIRSKTDRASKVAMNQIEGRLSDLIKKQRQSILEILAQVEVNIDYPEYDDVEDATTEFLLEQSKEIKQEINRLLDTGAQGKIMREGLSTVIVGKPNVGKSSMLNNLIQDNKAIVTEVAGTTRDVLEEYVNVRGVPLRLVDTAGIRETEDIVEKIGVERSRKALSQADLILFVLNNNEALTQEDYTLYEVVKNEDVIVIVNKMDLEQNIDINEVKDMIGDTPLIQTSMLKQEGIDELEIQIRDLFFGGEVQNQDMTYVSNSRHISLLKQARQTIQDAIDAAESGVPMDMVQIDLTRIWEILGEIIGETASDELIDQLFSQFCLGK</sequence>